<dbReference type="EMBL" id="AB064319">
    <property type="protein sequence ID" value="BAC16794.1"/>
    <property type="molecule type" value="Genomic_DNA"/>
</dbReference>
<dbReference type="EMBL" id="BA000031">
    <property type="protein sequence ID" value="BAC60578.1"/>
    <property type="molecule type" value="Genomic_DNA"/>
</dbReference>
<dbReference type="RefSeq" id="NP_798694.1">
    <property type="nucleotide sequence ID" value="NC_004603.1"/>
</dbReference>
<dbReference type="RefSeq" id="WP_005456723.1">
    <property type="nucleotide sequence ID" value="NC_004603.1"/>
</dbReference>
<dbReference type="PDB" id="1IS1">
    <property type="method" value="X-ray"/>
    <property type="resolution" value="2.20 A"/>
    <property type="chains" value="A=1-185"/>
</dbReference>
<dbReference type="PDBsum" id="1IS1"/>
<dbReference type="SMR" id="Q8GRF5"/>
<dbReference type="GeneID" id="1189828"/>
<dbReference type="KEGG" id="vpa:VP2315"/>
<dbReference type="PATRIC" id="fig|223926.6.peg.2217"/>
<dbReference type="eggNOG" id="COG0233">
    <property type="taxonomic scope" value="Bacteria"/>
</dbReference>
<dbReference type="HOGENOM" id="CLU_073981_2_1_6"/>
<dbReference type="EvolutionaryTrace" id="Q8GRF5"/>
<dbReference type="Proteomes" id="UP000002493">
    <property type="component" value="Chromosome 1"/>
</dbReference>
<dbReference type="GO" id="GO:0005829">
    <property type="term" value="C:cytosol"/>
    <property type="evidence" value="ECO:0007669"/>
    <property type="project" value="GOC"/>
</dbReference>
<dbReference type="GO" id="GO:0043023">
    <property type="term" value="F:ribosomal large subunit binding"/>
    <property type="evidence" value="ECO:0007669"/>
    <property type="project" value="TreeGrafter"/>
</dbReference>
<dbReference type="GO" id="GO:0002184">
    <property type="term" value="P:cytoplasmic translational termination"/>
    <property type="evidence" value="ECO:0007669"/>
    <property type="project" value="TreeGrafter"/>
</dbReference>
<dbReference type="CDD" id="cd00520">
    <property type="entry name" value="RRF"/>
    <property type="match status" value="1"/>
</dbReference>
<dbReference type="FunFam" id="1.10.132.20:FF:000001">
    <property type="entry name" value="Ribosome-recycling factor"/>
    <property type="match status" value="1"/>
</dbReference>
<dbReference type="FunFam" id="3.30.1360.40:FF:000001">
    <property type="entry name" value="Ribosome-recycling factor"/>
    <property type="match status" value="1"/>
</dbReference>
<dbReference type="Gene3D" id="3.30.1360.40">
    <property type="match status" value="1"/>
</dbReference>
<dbReference type="Gene3D" id="1.10.132.20">
    <property type="entry name" value="Ribosome-recycling factor"/>
    <property type="match status" value="1"/>
</dbReference>
<dbReference type="HAMAP" id="MF_00040">
    <property type="entry name" value="RRF"/>
    <property type="match status" value="1"/>
</dbReference>
<dbReference type="InterPro" id="IPR002661">
    <property type="entry name" value="Ribosome_recyc_fac"/>
</dbReference>
<dbReference type="InterPro" id="IPR023584">
    <property type="entry name" value="Ribosome_recyc_fac_dom"/>
</dbReference>
<dbReference type="InterPro" id="IPR036191">
    <property type="entry name" value="RRF_sf"/>
</dbReference>
<dbReference type="NCBIfam" id="TIGR00496">
    <property type="entry name" value="frr"/>
    <property type="match status" value="1"/>
</dbReference>
<dbReference type="PANTHER" id="PTHR20982:SF3">
    <property type="entry name" value="MITOCHONDRIAL RIBOSOME RECYCLING FACTOR PSEUDO 1"/>
    <property type="match status" value="1"/>
</dbReference>
<dbReference type="PANTHER" id="PTHR20982">
    <property type="entry name" value="RIBOSOME RECYCLING FACTOR"/>
    <property type="match status" value="1"/>
</dbReference>
<dbReference type="Pfam" id="PF01765">
    <property type="entry name" value="RRF"/>
    <property type="match status" value="1"/>
</dbReference>
<dbReference type="SUPFAM" id="SSF55194">
    <property type="entry name" value="Ribosome recycling factor, RRF"/>
    <property type="match status" value="1"/>
</dbReference>
<reference key="1">
    <citation type="journal article" date="2003" name="J. Biol. Chem.">
        <title>Structure and binding mode of a ribosome recycling factor (RRF) from mesophilic bacterium.</title>
        <authorList>
            <person name="Nakano H."/>
            <person name="Yoshida T."/>
            <person name="Uchiyama S."/>
            <person name="Kawachi M."/>
            <person name="Matsuo H."/>
            <person name="Kato T."/>
            <person name="Ohshima A."/>
            <person name="Yamaichi Y."/>
            <person name="Honda T."/>
            <person name="Kato H."/>
            <person name="Yamagata Y."/>
            <person name="Ohkubo T."/>
            <person name="Kobayashi Y."/>
        </authorList>
    </citation>
    <scope>NUCLEOTIDE SEQUENCE [GENOMIC DNA]</scope>
    <scope>X-RAY CRYSTALLOGRAPHY (2.2 ANGSTROMS)</scope>
</reference>
<reference key="2">
    <citation type="journal article" date="2003" name="Lancet">
        <title>Genome sequence of Vibrio parahaemolyticus: a pathogenic mechanism distinct from that of V. cholerae.</title>
        <authorList>
            <person name="Makino K."/>
            <person name="Oshima K."/>
            <person name="Kurokawa K."/>
            <person name="Yokoyama K."/>
            <person name="Uda T."/>
            <person name="Tagomori K."/>
            <person name="Iijima Y."/>
            <person name="Najima M."/>
            <person name="Nakano M."/>
            <person name="Yamashita A."/>
            <person name="Kubota Y."/>
            <person name="Kimura S."/>
            <person name="Yasunaga T."/>
            <person name="Honda T."/>
            <person name="Shinagawa H."/>
            <person name="Hattori M."/>
            <person name="Iida T."/>
        </authorList>
    </citation>
    <scope>NUCLEOTIDE SEQUENCE [LARGE SCALE GENOMIC DNA]</scope>
    <source>
        <strain>RIMD 2210633</strain>
    </source>
</reference>
<gene>
    <name evidence="1" type="primary">frr</name>
    <name type="ordered locus">VP2315</name>
</gene>
<comment type="function">
    <text>Responsible for the release of ribosomes from messenger RNA at the termination of protein biosynthesis. May increase the efficiency of translation by recycling ribosomes from one round of translation to another.</text>
</comment>
<comment type="subcellular location">
    <subcellularLocation>
        <location>Cytoplasm</location>
    </subcellularLocation>
</comment>
<comment type="similarity">
    <text evidence="1">Belongs to the RRF family.</text>
</comment>
<protein>
    <recommendedName>
        <fullName evidence="1">Ribosome-recycling factor</fullName>
        <shortName evidence="1">RRF</shortName>
    </recommendedName>
    <alternativeName>
        <fullName evidence="1">Ribosome-releasing factor</fullName>
    </alternativeName>
</protein>
<proteinExistence type="evidence at protein level"/>
<evidence type="ECO:0000255" key="1">
    <source>
        <dbReference type="HAMAP-Rule" id="MF_00040"/>
    </source>
</evidence>
<evidence type="ECO:0007829" key="2">
    <source>
        <dbReference type="PDB" id="1IS1"/>
    </source>
</evidence>
<keyword id="KW-0002">3D-structure</keyword>
<keyword id="KW-0963">Cytoplasm</keyword>
<keyword id="KW-0648">Protein biosynthesis</keyword>
<name>RRF_VIBPA</name>
<organism>
    <name type="scientific">Vibrio parahaemolyticus serotype O3:K6 (strain RIMD 2210633)</name>
    <dbReference type="NCBI Taxonomy" id="223926"/>
    <lineage>
        <taxon>Bacteria</taxon>
        <taxon>Pseudomonadati</taxon>
        <taxon>Pseudomonadota</taxon>
        <taxon>Gammaproteobacteria</taxon>
        <taxon>Vibrionales</taxon>
        <taxon>Vibrionaceae</taxon>
        <taxon>Vibrio</taxon>
    </lineage>
</organism>
<accession>Q8GRF5</accession>
<feature type="chain" id="PRO_0000167576" description="Ribosome-recycling factor">
    <location>
        <begin position="1"/>
        <end position="185"/>
    </location>
</feature>
<feature type="helix" evidence="2">
    <location>
        <begin position="2"/>
        <end position="24"/>
    </location>
</feature>
<feature type="helix" evidence="2">
    <location>
        <begin position="34"/>
        <end position="37"/>
    </location>
</feature>
<feature type="strand" evidence="2">
    <location>
        <begin position="41"/>
        <end position="44"/>
    </location>
</feature>
<feature type="strand" evidence="2">
    <location>
        <begin position="47"/>
        <end position="50"/>
    </location>
</feature>
<feature type="helix" evidence="2">
    <location>
        <begin position="51"/>
        <end position="53"/>
    </location>
</feature>
<feature type="strand" evidence="2">
    <location>
        <begin position="55"/>
        <end position="61"/>
    </location>
</feature>
<feature type="strand" evidence="2">
    <location>
        <begin position="64"/>
        <end position="71"/>
    </location>
</feature>
<feature type="turn" evidence="2">
    <location>
        <begin position="72"/>
        <end position="74"/>
    </location>
</feature>
<feature type="helix" evidence="2">
    <location>
        <begin position="75"/>
        <end position="84"/>
    </location>
</feature>
<feature type="strand" evidence="2">
    <location>
        <begin position="92"/>
        <end position="94"/>
    </location>
</feature>
<feature type="strand" evidence="2">
    <location>
        <begin position="97"/>
        <end position="101"/>
    </location>
</feature>
<feature type="helix" evidence="2">
    <location>
        <begin position="107"/>
        <end position="144"/>
    </location>
</feature>
<feature type="helix" evidence="2">
    <location>
        <begin position="150"/>
        <end position="183"/>
    </location>
</feature>
<sequence>MINEIKKDAQERMDKSVEALKNNLSKVRTGRAHPSLLSGISVEYYGAATPLNQVANVVAEDARTLAITVFDKELTQKVEKAIMMSDLGLNPMSAGTIIRVPLPPLTEERRKDLVKIVRGEAEGGRVAVRNIRRDANNDLKALLKDKEISEDEDRKAQEEIQKLTDVAVKKIDEVLAAKEKELMEV</sequence>